<gene>
    <name type="primary">trxA</name>
</gene>
<feature type="chain" id="PRO_0000120131" description="Thioredoxin">
    <location>
        <begin position="1"/>
        <end position="104"/>
    </location>
</feature>
<feature type="domain" description="Thioredoxin" evidence="2">
    <location>
        <begin position="2"/>
        <end position="104"/>
    </location>
</feature>
<feature type="disulfide bond" description="Redox-active" evidence="2">
    <location>
        <begin position="29"/>
        <end position="32"/>
    </location>
</feature>
<feature type="turn" evidence="5">
    <location>
        <begin position="8"/>
        <end position="10"/>
    </location>
</feature>
<feature type="helix" evidence="5">
    <location>
        <begin position="11"/>
        <end position="14"/>
    </location>
</feature>
<feature type="strand" evidence="5">
    <location>
        <begin position="17"/>
        <end position="25"/>
    </location>
</feature>
<feature type="helix" evidence="5">
    <location>
        <begin position="30"/>
        <end position="45"/>
    </location>
</feature>
<feature type="turn" evidence="5">
    <location>
        <begin position="46"/>
        <end position="49"/>
    </location>
</feature>
<feature type="strand" evidence="5">
    <location>
        <begin position="51"/>
        <end position="56"/>
    </location>
</feature>
<feature type="turn" evidence="5">
    <location>
        <begin position="57"/>
        <end position="59"/>
    </location>
</feature>
<feature type="helix" evidence="5">
    <location>
        <begin position="61"/>
        <end position="66"/>
    </location>
</feature>
<feature type="strand" evidence="5">
    <location>
        <begin position="71"/>
        <end position="79"/>
    </location>
</feature>
<feature type="strand" evidence="5">
    <location>
        <begin position="82"/>
        <end position="89"/>
    </location>
</feature>
<feature type="helix" evidence="5">
    <location>
        <begin position="93"/>
        <end position="101"/>
    </location>
</feature>
<sequence>MAIVKVTDADFDSKVESGVQLVDFWATWCGPCKMIAPVLEELAADYEGKADILKLDVDENPSTAAKYEVMSIPTLIVFKDGQPVDKVVGFQPKENLAEVLDKHL</sequence>
<proteinExistence type="evidence at protein level"/>
<accession>P0A0K6</accession>
<accession>Q9ZEH4</accession>
<name>THIO_STAAU</name>
<protein>
    <recommendedName>
        <fullName>Thioredoxin</fullName>
        <shortName>Trx</shortName>
    </recommendedName>
</protein>
<evidence type="ECO:0000250" key="1"/>
<evidence type="ECO:0000255" key="2">
    <source>
        <dbReference type="PROSITE-ProRule" id="PRU00691"/>
    </source>
</evidence>
<evidence type="ECO:0000269" key="3">
    <source>
    </source>
</evidence>
<evidence type="ECO:0000305" key="4"/>
<evidence type="ECO:0007829" key="5">
    <source>
        <dbReference type="PDB" id="3DIE"/>
    </source>
</evidence>
<organism>
    <name type="scientific">Staphylococcus aureus</name>
    <dbReference type="NCBI Taxonomy" id="1280"/>
    <lineage>
        <taxon>Bacteria</taxon>
        <taxon>Bacillati</taxon>
        <taxon>Bacillota</taxon>
        <taxon>Bacilli</taxon>
        <taxon>Bacillales</taxon>
        <taxon>Staphylococcaceae</taxon>
        <taxon>Staphylococcus</taxon>
    </lineage>
</organism>
<keyword id="KW-0002">3D-structure</keyword>
<keyword id="KW-1015">Disulfide bond</keyword>
<keyword id="KW-0249">Electron transport</keyword>
<keyword id="KW-0676">Redox-active center</keyword>
<keyword id="KW-0813">Transport</keyword>
<dbReference type="EMBL" id="AJ223480">
    <property type="protein sequence ID" value="CAA11404.1"/>
    <property type="molecule type" value="Genomic_DNA"/>
</dbReference>
<dbReference type="RefSeq" id="WP_001018928.1">
    <property type="nucleotide sequence ID" value="NZ_WYDB01000003.1"/>
</dbReference>
<dbReference type="PDB" id="2O7K">
    <property type="method" value="X-ray"/>
    <property type="resolution" value="2.20 A"/>
    <property type="chains" value="A=1-104"/>
</dbReference>
<dbReference type="PDB" id="2O85">
    <property type="method" value="X-ray"/>
    <property type="resolution" value="2.20 A"/>
    <property type="chains" value="A=1-104"/>
</dbReference>
<dbReference type="PDB" id="2O87">
    <property type="method" value="X-ray"/>
    <property type="resolution" value="2.40 A"/>
    <property type="chains" value="A=2-104"/>
</dbReference>
<dbReference type="PDB" id="2O89">
    <property type="method" value="X-ray"/>
    <property type="resolution" value="2.55 A"/>
    <property type="chains" value="A=1-104"/>
</dbReference>
<dbReference type="PDB" id="3DIE">
    <property type="method" value="X-ray"/>
    <property type="resolution" value="1.85 A"/>
    <property type="chains" value="A/B=1-104"/>
</dbReference>
<dbReference type="PDBsum" id="2O7K"/>
<dbReference type="PDBsum" id="2O85"/>
<dbReference type="PDBsum" id="2O87"/>
<dbReference type="PDBsum" id="2O89"/>
<dbReference type="PDBsum" id="3DIE"/>
<dbReference type="SMR" id="P0A0K6"/>
<dbReference type="GeneID" id="98345462"/>
<dbReference type="OMA" id="HIHYVTD"/>
<dbReference type="OrthoDB" id="9790390at2"/>
<dbReference type="EvolutionaryTrace" id="P0A0K6"/>
<dbReference type="GO" id="GO:0005829">
    <property type="term" value="C:cytosol"/>
    <property type="evidence" value="ECO:0007669"/>
    <property type="project" value="TreeGrafter"/>
</dbReference>
<dbReference type="GO" id="GO:0015035">
    <property type="term" value="F:protein-disulfide reductase activity"/>
    <property type="evidence" value="ECO:0007669"/>
    <property type="project" value="InterPro"/>
</dbReference>
<dbReference type="GO" id="GO:0045454">
    <property type="term" value="P:cell redox homeostasis"/>
    <property type="evidence" value="ECO:0007669"/>
    <property type="project" value="TreeGrafter"/>
</dbReference>
<dbReference type="CDD" id="cd02947">
    <property type="entry name" value="TRX_family"/>
    <property type="match status" value="1"/>
</dbReference>
<dbReference type="FunFam" id="3.40.30.10:FF:000001">
    <property type="entry name" value="Thioredoxin"/>
    <property type="match status" value="1"/>
</dbReference>
<dbReference type="Gene3D" id="3.40.30.10">
    <property type="entry name" value="Glutaredoxin"/>
    <property type="match status" value="1"/>
</dbReference>
<dbReference type="InterPro" id="IPR005746">
    <property type="entry name" value="Thioredoxin"/>
</dbReference>
<dbReference type="InterPro" id="IPR036249">
    <property type="entry name" value="Thioredoxin-like_sf"/>
</dbReference>
<dbReference type="InterPro" id="IPR017937">
    <property type="entry name" value="Thioredoxin_CS"/>
</dbReference>
<dbReference type="InterPro" id="IPR013766">
    <property type="entry name" value="Thioredoxin_domain"/>
</dbReference>
<dbReference type="NCBIfam" id="TIGR01068">
    <property type="entry name" value="thioredoxin"/>
    <property type="match status" value="1"/>
</dbReference>
<dbReference type="PANTHER" id="PTHR45663">
    <property type="entry name" value="GEO12009P1"/>
    <property type="match status" value="1"/>
</dbReference>
<dbReference type="PANTHER" id="PTHR45663:SF11">
    <property type="entry name" value="GEO12009P1"/>
    <property type="match status" value="1"/>
</dbReference>
<dbReference type="Pfam" id="PF00085">
    <property type="entry name" value="Thioredoxin"/>
    <property type="match status" value="1"/>
</dbReference>
<dbReference type="PIRSF" id="PIRSF000077">
    <property type="entry name" value="Thioredoxin"/>
    <property type="match status" value="1"/>
</dbReference>
<dbReference type="PRINTS" id="PR00421">
    <property type="entry name" value="THIOREDOXIN"/>
</dbReference>
<dbReference type="SUPFAM" id="SSF52833">
    <property type="entry name" value="Thioredoxin-like"/>
    <property type="match status" value="1"/>
</dbReference>
<dbReference type="PROSITE" id="PS00194">
    <property type="entry name" value="THIOREDOXIN_1"/>
    <property type="match status" value="1"/>
</dbReference>
<dbReference type="PROSITE" id="PS51352">
    <property type="entry name" value="THIOREDOXIN_2"/>
    <property type="match status" value="1"/>
</dbReference>
<reference key="1">
    <citation type="journal article" date="2004" name="J. Bacteriol.">
        <title>Transcriptional regulation of the Staphylococcus aureus thioredoxin and thioredoxin reductase genes in response to oxygen and disulfide stress.</title>
        <authorList>
            <person name="Uziel O."/>
            <person name="Borovok I."/>
            <person name="Schreiber R."/>
            <person name="Cohen G."/>
            <person name="Aharonowitz Y."/>
        </authorList>
    </citation>
    <scope>NUCLEOTIDE SEQUENCE [GENOMIC DNA]</scope>
    <scope>INDUCTION</scope>
    <source>
        <strain>ATCC 9144 / DSM 683 / NCIB 6571 / NCTC 6571 / NRRL B-314 / Oxford</strain>
    </source>
</reference>
<comment type="function">
    <text evidence="1">Component of the thioredoxin-thioredoxin reductase system. Participates in various redox reactions through the reversible oxidation of its active center dithiol to a disulfide and catalyzes dithiol-disulfide exchange reactions (By similarity).</text>
</comment>
<comment type="induction">
    <text evidence="3">Expressed in both aerobic and anaerobic conditions.</text>
</comment>
<comment type="similarity">
    <text evidence="4">Belongs to the thioredoxin family.</text>
</comment>